<protein>
    <recommendedName>
        <fullName evidence="7">Type 3 secretion system pilotin</fullName>
    </recommendedName>
    <alternativeName>
        <fullName evidence="7">Lipoprotein VirG</fullName>
    </alternativeName>
    <alternativeName>
        <fullName evidence="5">Pilot protein YscW</fullName>
    </alternativeName>
</protein>
<proteinExistence type="evidence at protein level"/>
<feature type="signal peptide" evidence="1">
    <location>
        <begin position="1"/>
        <end position="15"/>
    </location>
</feature>
<feature type="chain" id="PRO_0000447818" description="Type 3 secretion system pilotin" evidence="1">
    <location>
        <begin position="16"/>
        <end position="131"/>
    </location>
</feature>
<feature type="lipid moiety-binding region" description="N-palmitoyl cysteine" evidence="1">
    <location>
        <position position="16"/>
    </location>
</feature>
<feature type="lipid moiety-binding region" description="S-diacylglycerol cysteine" evidence="1">
    <location>
        <position position="16"/>
    </location>
</feature>
<feature type="mutagenesis site" description="No change in activity." evidence="3">
    <original>C</original>
    <variation>S</variation>
    <location>
        <position position="121"/>
    </location>
</feature>
<feature type="mutagenesis site" description="No change in activity." evidence="3">
    <original>C</original>
    <variation>S</variation>
    <location>
        <position position="125"/>
    </location>
</feature>
<organism>
    <name type="scientific">Yersinia enterocolitica</name>
    <dbReference type="NCBI Taxonomy" id="630"/>
    <lineage>
        <taxon>Bacteria</taxon>
        <taxon>Pseudomonadati</taxon>
        <taxon>Pseudomonadota</taxon>
        <taxon>Gammaproteobacteria</taxon>
        <taxon>Enterobacterales</taxon>
        <taxon>Yersiniaceae</taxon>
        <taxon>Yersinia</taxon>
    </lineage>
</organism>
<sequence>MSRIIALIISFLLVGCATPPMPAQRIVGEVRMSRPLSRTAHIDVSIFGLYEGKVREVQRTRFETGNLPLFFSIKLNPAQRGEGELYLRSTLSFPERGVQAVAQQKLIGKNKVVLQMIPKTCYPNCQSPNTR</sequence>
<name>SCTG_YEREN</name>
<evidence type="ECO:0000255" key="1">
    <source>
        <dbReference type="PROSITE-ProRule" id="PRU00303"/>
    </source>
</evidence>
<evidence type="ECO:0000269" key="2">
    <source>
    </source>
</evidence>
<evidence type="ECO:0000269" key="3">
    <source>
    </source>
</evidence>
<evidence type="ECO:0000269" key="4">
    <source>
    </source>
</evidence>
<evidence type="ECO:0000303" key="5">
    <source>
    </source>
</evidence>
<evidence type="ECO:0000303" key="6">
    <source>
    </source>
</evidence>
<evidence type="ECO:0000305" key="7"/>
<evidence type="ECO:0000312" key="8">
    <source>
        <dbReference type="EMBL" id="CNK32226.1"/>
    </source>
</evidence>
<reference key="1">
    <citation type="journal article" date="1995" name="J. Bacteriol.">
        <title>VirG, a Yersinia enterocolitica lipoprotein involved in Ca2+ dependency, is related to exsB of Pseudomonas aeruginosa.</title>
        <authorList>
            <person name="Allaoui A."/>
            <person name="Scheen R."/>
            <person name="Lambert de Rouvroit C."/>
            <person name="Cornelis G.R."/>
        </authorList>
    </citation>
    <scope>NUCLEOTIDE SEQUENCE [GENOMIC DNA]</scope>
    <scope>SUBCELLULAR LOCATION</scope>
    <scope>DISRUPTION PHENOTYPE</scope>
    <scope>MUTAGENESIS OF CYS-121 AND CYS-125</scope>
    <source>
        <strain>W22703 / Serotype O:9 / Biotype 2</strain>
        <plasmid>pYVe227</plasmid>
    </source>
</reference>
<reference key="2">
    <citation type="submission" date="1998-10" db="EMBL/GenBank/DDBJ databases">
        <title>Detailed genetic map of the pYVe227 plasmid of Yersinia enterocolitica serotype O:9.</title>
        <authorList>
            <person name="Iriarte M."/>
            <person name="Lambermont I."/>
            <person name="Kerbourch C."/>
            <person name="Cornelis G.R."/>
        </authorList>
    </citation>
    <scope>NUCLEOTIDE SEQUENCE [GENOMIC DNA]</scope>
    <source>
        <strain>W22703 / Serotype O:9 / Biotype 2</strain>
        <plasmid>pYVe227</plasmid>
    </source>
</reference>
<reference key="3">
    <citation type="journal article" date="2001" name="Infect. Immun.">
        <title>Complete DNA sequence of Yersinia enterocolitica serotype 0:8 low-calcium-response plasmid reveals a new virulence plasmid-associated replicon.</title>
        <authorList>
            <person name="Snellings N.J."/>
            <person name="Popek M."/>
            <person name="Lindler L.E."/>
        </authorList>
    </citation>
    <scope>NUCLEOTIDE SEQUENCE [GENOMIC DNA]</scope>
    <source>
        <strain>8081</strain>
        <plasmid>pYVe8081</plasmid>
    </source>
</reference>
<reference key="4">
    <citation type="journal article" date="2003" name="Res. Microbiol.">
        <title>DNA sequence and analysis of the pYVa127/90 virulence plasmid of Yersinia enterocolitica strain A127/90.</title>
        <authorList>
            <person name="Foultier B."/>
            <person name="Cornelis G.R."/>
        </authorList>
    </citation>
    <scope>NUCLEOTIDE SEQUENCE [GENOMIC DNA]</scope>
    <source>
        <strain>A127/90 / Serotype O:8 / Biotype 1B</strain>
        <plasmid>pYVa127/90</plasmid>
    </source>
</reference>
<reference key="5">
    <citation type="submission" date="2015-03" db="EMBL/GenBank/DDBJ databases">
        <authorList>
            <consortium name="Pathogen Informatics"/>
            <person name="Murphy D."/>
        </authorList>
    </citation>
    <scope>NUCLEOTIDE SEQUENCE [LARGE SCALE GENOMIC DNA]</scope>
    <source>
        <strain>WA</strain>
    </source>
</reference>
<reference key="6">
    <citation type="journal article" date="1997" name="Mol. Microbiol.">
        <title>The outer membrane component, YscC, of the Yop secretion machinery of Yersinia enterocolitica forms a ring-shaped multimeric complex.</title>
        <authorList>
            <person name="Koster M."/>
            <person name="Bitter W."/>
            <person name="de Cock H."/>
            <person name="Allaoui A."/>
            <person name="Cornelis G.R."/>
            <person name="Tommassen J."/>
        </authorList>
    </citation>
    <scope>FUNCTION</scope>
    <scope>DISRUPTION PHENOTYPE</scope>
    <source>
        <strain>W22703 / Serotype O:9 / Biotype 2</strain>
    </source>
</reference>
<reference key="7">
    <citation type="journal article" date="2004" name="J. Bacteriol.">
        <title>Role of the pilot protein YscW in the biogenesis of the YscC secretin in Yersinia enterocolitica.</title>
        <authorList>
            <person name="Burghout P."/>
            <person name="Beckers F."/>
            <person name="de Wit E."/>
            <person name="van Boxtel R."/>
            <person name="Cornelis G.R."/>
            <person name="Tommassen J."/>
            <person name="Koster M."/>
        </authorList>
    </citation>
    <scope>FUNCTION</scope>
    <scope>INTERACTION WITH YSCC/SCTC</scope>
    <scope>SUBCELLULAR LOCATION</scope>
    <scope>DISRUPTION PHENOTYPE</scope>
    <source>
        <strain>W22703 / Serotype O:9 / Biotype 2</strain>
    </source>
</reference>
<accession>Q56851</accession>
<accession>Q56923</accession>
<dbReference type="EMBL" id="AF102990">
    <property type="protein sequence ID" value="AAD16832.1"/>
    <property type="molecule type" value="Genomic_DNA"/>
</dbReference>
<dbReference type="EMBL" id="AF336309">
    <property type="protein sequence ID" value="AAK69231.1"/>
    <property type="molecule type" value="Genomic_DNA"/>
</dbReference>
<dbReference type="EMBL" id="AY150843">
    <property type="protein sequence ID" value="AAN37559.1"/>
    <property type="molecule type" value="Genomic_DNA"/>
</dbReference>
<dbReference type="EMBL" id="CQCV01000031">
    <property type="protein sequence ID" value="CNK32226.1"/>
    <property type="molecule type" value="Genomic_DNA"/>
</dbReference>
<dbReference type="PIR" id="A32242">
    <property type="entry name" value="A32242"/>
</dbReference>
<dbReference type="RefSeq" id="NP_052409.1">
    <property type="nucleotide sequence ID" value="NC_002120.1"/>
</dbReference>
<dbReference type="RefSeq" id="NP_783683.1">
    <property type="nucleotide sequence ID" value="NC_004564.1"/>
</dbReference>
<dbReference type="RefSeq" id="NP_863531.1">
    <property type="nucleotide sequence ID" value="NC_005017.1"/>
</dbReference>
<dbReference type="RefSeq" id="WP_005176443.1">
    <property type="nucleotide sequence ID" value="NZ_NWMR01000033.1"/>
</dbReference>
<dbReference type="SMR" id="Q56851"/>
<dbReference type="GeneID" id="31412290"/>
<dbReference type="KEGG" id="yew:CH47_4192"/>
<dbReference type="PATRIC" id="fig|630.129.peg.4370"/>
<dbReference type="GO" id="GO:0009279">
    <property type="term" value="C:cell outer membrane"/>
    <property type="evidence" value="ECO:0007669"/>
    <property type="project" value="UniProtKB-SubCell"/>
</dbReference>
<dbReference type="Gene3D" id="2.60.40.2990">
    <property type="match status" value="1"/>
</dbReference>
<dbReference type="InterPro" id="IPR039366">
    <property type="entry name" value="Pilotin"/>
</dbReference>
<dbReference type="InterPro" id="IPR053740">
    <property type="entry name" value="T3SS_Pilotin"/>
</dbReference>
<dbReference type="NCBIfam" id="TIGR02567">
    <property type="entry name" value="YscW"/>
    <property type="match status" value="1"/>
</dbReference>
<dbReference type="Pfam" id="PF09619">
    <property type="entry name" value="YscW"/>
    <property type="match status" value="1"/>
</dbReference>
<dbReference type="PROSITE" id="PS51257">
    <property type="entry name" value="PROKAR_LIPOPROTEIN"/>
    <property type="match status" value="1"/>
</dbReference>
<comment type="function">
    <text evidence="2 4">Involved in the synthesis of the type III secretion system (T3SS), also called injectisome, which is used to inject bacterial effector proteins into eukaryotic host cells (PubMed:15292137, PubMed:9427408). Pilot protein that is required for the proper localization of the secretin YscC/SctC in the outer membrane (PubMed:15292137, PubMed:9427408). Also required for efficient oligomerization of YscC/SctC and stabilization of the oligomers (PubMed:15292137).</text>
</comment>
<comment type="subunit">
    <text evidence="2">Interacts with YscC/SctC.</text>
</comment>
<comment type="subcellular location">
    <subcellularLocation>
        <location evidence="2">Cell outer membrane</location>
        <topology evidence="1 3">Lipid-anchor</topology>
    </subcellularLocation>
    <text evidence="2">Association with the outer membrane is a prerequisite for function in the biogenesis of YscC/SctC.</text>
</comment>
<comment type="disruption phenotype">
    <text evidence="2 3 4">In mutant, only a small amount of YscC/SctC is properly targeted to the outer membrane (PubMed:15292137, PubMed:9427408). Mutant is Ca(2+) independent for growth at 37 degrees Celsius and secretes smaller amounts of Yop proteins (PubMed:7635810).</text>
</comment>
<comment type="similarity">
    <text evidence="7">Belongs to the ExsB/YscW family.</text>
</comment>
<keyword id="KW-0998">Cell outer membrane</keyword>
<keyword id="KW-0449">Lipoprotein</keyword>
<keyword id="KW-0472">Membrane</keyword>
<keyword id="KW-0564">Palmitate</keyword>
<keyword id="KW-0614">Plasmid</keyword>
<keyword id="KW-0732">Signal</keyword>
<keyword id="KW-0843">Virulence</keyword>
<geneLocation type="plasmid">
    <name>pYVa127/90</name>
</geneLocation>
<geneLocation type="plasmid">
    <name>pYVe227</name>
</geneLocation>
<geneLocation type="plasmid">
    <name>pYVe8081</name>
</geneLocation>
<gene>
    <name evidence="5" type="primary">yscW</name>
    <name evidence="7" type="synonym">sctG</name>
    <name evidence="6" type="synonym">virG</name>
    <name evidence="8" type="ORF">ERS137951_03726</name>
</gene>